<protein>
    <recommendedName>
        <fullName evidence="1">Holliday junction branch migration complex subunit RuvA</fullName>
    </recommendedName>
</protein>
<dbReference type="EMBL" id="AE016958">
    <property type="protein sequence ID" value="AAS03354.1"/>
    <property type="molecule type" value="Genomic_DNA"/>
</dbReference>
<dbReference type="RefSeq" id="WP_003872685.1">
    <property type="nucleotide sequence ID" value="NZ_CP106873.1"/>
</dbReference>
<dbReference type="SMR" id="Q741Q1"/>
<dbReference type="STRING" id="262316.MAP_1037"/>
<dbReference type="KEGG" id="mpa:MAP_1037"/>
<dbReference type="eggNOG" id="COG0632">
    <property type="taxonomic scope" value="Bacteria"/>
</dbReference>
<dbReference type="HOGENOM" id="CLU_087936_2_1_11"/>
<dbReference type="Proteomes" id="UP000000580">
    <property type="component" value="Chromosome"/>
</dbReference>
<dbReference type="GO" id="GO:0005737">
    <property type="term" value="C:cytoplasm"/>
    <property type="evidence" value="ECO:0007669"/>
    <property type="project" value="UniProtKB-SubCell"/>
</dbReference>
<dbReference type="GO" id="GO:0009379">
    <property type="term" value="C:Holliday junction helicase complex"/>
    <property type="evidence" value="ECO:0007669"/>
    <property type="project" value="InterPro"/>
</dbReference>
<dbReference type="GO" id="GO:0048476">
    <property type="term" value="C:Holliday junction resolvase complex"/>
    <property type="evidence" value="ECO:0007669"/>
    <property type="project" value="UniProtKB-UniRule"/>
</dbReference>
<dbReference type="GO" id="GO:0005524">
    <property type="term" value="F:ATP binding"/>
    <property type="evidence" value="ECO:0007669"/>
    <property type="project" value="InterPro"/>
</dbReference>
<dbReference type="GO" id="GO:0000400">
    <property type="term" value="F:four-way junction DNA binding"/>
    <property type="evidence" value="ECO:0007669"/>
    <property type="project" value="UniProtKB-UniRule"/>
</dbReference>
<dbReference type="GO" id="GO:0009378">
    <property type="term" value="F:four-way junction helicase activity"/>
    <property type="evidence" value="ECO:0007669"/>
    <property type="project" value="InterPro"/>
</dbReference>
<dbReference type="GO" id="GO:0006310">
    <property type="term" value="P:DNA recombination"/>
    <property type="evidence" value="ECO:0007669"/>
    <property type="project" value="UniProtKB-UniRule"/>
</dbReference>
<dbReference type="GO" id="GO:0006281">
    <property type="term" value="P:DNA repair"/>
    <property type="evidence" value="ECO:0007669"/>
    <property type="project" value="UniProtKB-UniRule"/>
</dbReference>
<dbReference type="CDD" id="cd14332">
    <property type="entry name" value="UBA_RuvA_C"/>
    <property type="match status" value="1"/>
</dbReference>
<dbReference type="FunFam" id="2.40.50.140:FF:000083">
    <property type="entry name" value="Holliday junction ATP-dependent DNA helicase RuvA"/>
    <property type="match status" value="1"/>
</dbReference>
<dbReference type="Gene3D" id="1.10.150.20">
    <property type="entry name" value="5' to 3' exonuclease, C-terminal subdomain"/>
    <property type="match status" value="1"/>
</dbReference>
<dbReference type="Gene3D" id="1.10.8.10">
    <property type="entry name" value="DNA helicase RuvA subunit, C-terminal domain"/>
    <property type="match status" value="1"/>
</dbReference>
<dbReference type="Gene3D" id="2.40.50.140">
    <property type="entry name" value="Nucleic acid-binding proteins"/>
    <property type="match status" value="1"/>
</dbReference>
<dbReference type="HAMAP" id="MF_00031">
    <property type="entry name" value="DNA_HJ_migration_RuvA"/>
    <property type="match status" value="1"/>
</dbReference>
<dbReference type="InterPro" id="IPR013849">
    <property type="entry name" value="DNA_helicase_Holl-junc_RuvA_I"/>
</dbReference>
<dbReference type="InterPro" id="IPR012340">
    <property type="entry name" value="NA-bd_OB-fold"/>
</dbReference>
<dbReference type="InterPro" id="IPR000085">
    <property type="entry name" value="RuvA"/>
</dbReference>
<dbReference type="InterPro" id="IPR010994">
    <property type="entry name" value="RuvA_2-like"/>
</dbReference>
<dbReference type="InterPro" id="IPR011114">
    <property type="entry name" value="RuvA_C"/>
</dbReference>
<dbReference type="InterPro" id="IPR036267">
    <property type="entry name" value="RuvA_C_sf"/>
</dbReference>
<dbReference type="NCBIfam" id="TIGR00084">
    <property type="entry name" value="ruvA"/>
    <property type="match status" value="1"/>
</dbReference>
<dbReference type="Pfam" id="PF14520">
    <property type="entry name" value="HHH_5"/>
    <property type="match status" value="1"/>
</dbReference>
<dbReference type="Pfam" id="PF07499">
    <property type="entry name" value="RuvA_C"/>
    <property type="match status" value="1"/>
</dbReference>
<dbReference type="Pfam" id="PF01330">
    <property type="entry name" value="RuvA_N"/>
    <property type="match status" value="1"/>
</dbReference>
<dbReference type="SUPFAM" id="SSF46929">
    <property type="entry name" value="DNA helicase RuvA subunit, C-terminal domain"/>
    <property type="match status" value="1"/>
</dbReference>
<dbReference type="SUPFAM" id="SSF50249">
    <property type="entry name" value="Nucleic acid-binding proteins"/>
    <property type="match status" value="1"/>
</dbReference>
<dbReference type="SUPFAM" id="SSF47781">
    <property type="entry name" value="RuvA domain 2-like"/>
    <property type="match status" value="1"/>
</dbReference>
<organism>
    <name type="scientific">Mycolicibacterium paratuberculosis (strain ATCC BAA-968 / K-10)</name>
    <name type="common">Mycobacterium paratuberculosis</name>
    <dbReference type="NCBI Taxonomy" id="262316"/>
    <lineage>
        <taxon>Bacteria</taxon>
        <taxon>Bacillati</taxon>
        <taxon>Actinomycetota</taxon>
        <taxon>Actinomycetes</taxon>
        <taxon>Mycobacteriales</taxon>
        <taxon>Mycobacteriaceae</taxon>
        <taxon>Mycobacterium</taxon>
        <taxon>Mycobacterium avium complex (MAC)</taxon>
    </lineage>
</organism>
<proteinExistence type="inferred from homology"/>
<sequence>MIASVRGEVLEVALDHAVIEAAGVGYRVNATPSTLSTLRTGTQARLITAMIVREDSMTLYGFTDAETRDLFLTLLSVSGVGPRLAMATLAVHDAGALRQALHDGDVAALTRVPGIGKRGAERMVLELRDKIGAAGAAGAPAGAARNGHAVRGPVVEALVGLGFAAKQAEEATDKVLAAEPEAGTSGALRAALSLLGKSR</sequence>
<gene>
    <name evidence="1" type="primary">ruvA</name>
    <name type="ordered locus">MAP_1037</name>
</gene>
<comment type="function">
    <text evidence="1">The RuvA-RuvB-RuvC complex processes Holliday junction (HJ) DNA during genetic recombination and DNA repair, while the RuvA-RuvB complex plays an important role in the rescue of blocked DNA replication forks via replication fork reversal (RFR). RuvA specifically binds to HJ cruciform DNA, conferring on it an open structure. The RuvB hexamer acts as an ATP-dependent pump, pulling dsDNA into and through the RuvAB complex. HJ branch migration allows RuvC to scan DNA until it finds its consensus sequence, where it cleaves and resolves the cruciform DNA.</text>
</comment>
<comment type="subunit">
    <text evidence="1">Homotetramer. Forms an RuvA(8)-RuvB(12)-Holliday junction (HJ) complex. HJ DNA is sandwiched between 2 RuvA tetramers; dsDNA enters through RuvA and exits via RuvB. An RuvB hexamer assembles on each DNA strand where it exits the tetramer. Each RuvB hexamer is contacted by two RuvA subunits (via domain III) on 2 adjacent RuvB subunits; this complex drives branch migration. In the full resolvosome a probable DNA-RuvA(4)-RuvB(12)-RuvC(2) complex forms which resolves the HJ.</text>
</comment>
<comment type="subcellular location">
    <subcellularLocation>
        <location evidence="1">Cytoplasm</location>
    </subcellularLocation>
</comment>
<comment type="domain">
    <text evidence="1">Has three domains with a flexible linker between the domains II and III and assumes an 'L' shape. Domain III is highly mobile and contacts RuvB.</text>
</comment>
<comment type="similarity">
    <text evidence="1">Belongs to the RuvA family.</text>
</comment>
<accession>Q741Q1</accession>
<evidence type="ECO:0000255" key="1">
    <source>
        <dbReference type="HAMAP-Rule" id="MF_00031"/>
    </source>
</evidence>
<feature type="chain" id="PRO_0000224881" description="Holliday junction branch migration complex subunit RuvA">
    <location>
        <begin position="1"/>
        <end position="199"/>
    </location>
</feature>
<feature type="region of interest" description="Domain I" evidence="1">
    <location>
        <begin position="1"/>
        <end position="63"/>
    </location>
</feature>
<feature type="region of interest" description="Domain II" evidence="1">
    <location>
        <begin position="64"/>
        <end position="142"/>
    </location>
</feature>
<feature type="region of interest" description="Flexible linker" evidence="1">
    <location>
        <begin position="143"/>
        <end position="153"/>
    </location>
</feature>
<feature type="region of interest" description="Domain III" evidence="1">
    <location>
        <begin position="153"/>
        <end position="199"/>
    </location>
</feature>
<name>RUVA_MYCPA</name>
<reference key="1">
    <citation type="journal article" date="2005" name="Proc. Natl. Acad. Sci. U.S.A.">
        <title>The complete genome sequence of Mycobacterium avium subspecies paratuberculosis.</title>
        <authorList>
            <person name="Li L."/>
            <person name="Bannantine J.P."/>
            <person name="Zhang Q."/>
            <person name="Amonsin A."/>
            <person name="May B.J."/>
            <person name="Alt D."/>
            <person name="Banerji N."/>
            <person name="Kanjilal S."/>
            <person name="Kapur V."/>
        </authorList>
    </citation>
    <scope>NUCLEOTIDE SEQUENCE [LARGE SCALE GENOMIC DNA]</scope>
    <source>
        <strain>ATCC BAA-968 / K-10</strain>
    </source>
</reference>
<keyword id="KW-0963">Cytoplasm</keyword>
<keyword id="KW-0227">DNA damage</keyword>
<keyword id="KW-0233">DNA recombination</keyword>
<keyword id="KW-0234">DNA repair</keyword>
<keyword id="KW-0238">DNA-binding</keyword>
<keyword id="KW-1185">Reference proteome</keyword>